<organism>
    <name type="scientific">Thermotoga petrophila (strain ATCC BAA-488 / DSM 13995 / JCM 10881 / RKU-1)</name>
    <dbReference type="NCBI Taxonomy" id="390874"/>
    <lineage>
        <taxon>Bacteria</taxon>
        <taxon>Thermotogati</taxon>
        <taxon>Thermotogota</taxon>
        <taxon>Thermotogae</taxon>
        <taxon>Thermotogales</taxon>
        <taxon>Thermotogaceae</taxon>
        <taxon>Thermotoga</taxon>
    </lineage>
</organism>
<name>RIMM_THEP1</name>
<reference key="1">
    <citation type="submission" date="2007-05" db="EMBL/GenBank/DDBJ databases">
        <title>Complete sequence of Thermotoga petrophila RKU-1.</title>
        <authorList>
            <consortium name="US DOE Joint Genome Institute"/>
            <person name="Copeland A."/>
            <person name="Lucas S."/>
            <person name="Lapidus A."/>
            <person name="Barry K."/>
            <person name="Glavina del Rio T."/>
            <person name="Dalin E."/>
            <person name="Tice H."/>
            <person name="Pitluck S."/>
            <person name="Sims D."/>
            <person name="Brettin T."/>
            <person name="Bruce D."/>
            <person name="Detter J.C."/>
            <person name="Han C."/>
            <person name="Tapia R."/>
            <person name="Schmutz J."/>
            <person name="Larimer F."/>
            <person name="Land M."/>
            <person name="Hauser L."/>
            <person name="Kyrpides N."/>
            <person name="Mikhailova N."/>
            <person name="Nelson K."/>
            <person name="Gogarten J.P."/>
            <person name="Noll K."/>
            <person name="Richardson P."/>
        </authorList>
    </citation>
    <scope>NUCLEOTIDE SEQUENCE [LARGE SCALE GENOMIC DNA]</scope>
    <source>
        <strain>ATCC BAA-488 / DSM 13995 / JCM 10881 / RKU-1</strain>
    </source>
</reference>
<gene>
    <name evidence="1" type="primary">rimM</name>
    <name type="ordered locus">Tpet_1224</name>
</gene>
<keyword id="KW-0143">Chaperone</keyword>
<keyword id="KW-0963">Cytoplasm</keyword>
<keyword id="KW-0690">Ribosome biogenesis</keyword>
<keyword id="KW-0698">rRNA processing</keyword>
<accession>A5IM15</accession>
<sequence length="176" mass="20419">MIRTIQDLLNERVAIGKIVNTHGLKGEVKFFPYTNSEEIVKNLSSVVLYNSEKKAFYNLTVESVRRMNKLFLIRFKSIDTIEAAERIKGCEVFIKYEELPKLSEDEYYFYEILDCDVFYESGENVGKVVDIIETGSNDVLVVRKKKKETLIPMTKDCIVEIDKGAKKIIAKEMEWI</sequence>
<dbReference type="EMBL" id="CP000702">
    <property type="protein sequence ID" value="ABQ47238.1"/>
    <property type="molecule type" value="Genomic_DNA"/>
</dbReference>
<dbReference type="RefSeq" id="WP_004081983.1">
    <property type="nucleotide sequence ID" value="NC_009486.1"/>
</dbReference>
<dbReference type="SMR" id="A5IM15"/>
<dbReference type="STRING" id="390874.Tpet_1224"/>
<dbReference type="KEGG" id="tpt:Tpet_1224"/>
<dbReference type="eggNOG" id="COG0806">
    <property type="taxonomic scope" value="Bacteria"/>
</dbReference>
<dbReference type="HOGENOM" id="CLU_077636_1_0_0"/>
<dbReference type="Proteomes" id="UP000006558">
    <property type="component" value="Chromosome"/>
</dbReference>
<dbReference type="GO" id="GO:0005737">
    <property type="term" value="C:cytoplasm"/>
    <property type="evidence" value="ECO:0007669"/>
    <property type="project" value="UniProtKB-SubCell"/>
</dbReference>
<dbReference type="GO" id="GO:0005840">
    <property type="term" value="C:ribosome"/>
    <property type="evidence" value="ECO:0007669"/>
    <property type="project" value="InterPro"/>
</dbReference>
<dbReference type="GO" id="GO:0043022">
    <property type="term" value="F:ribosome binding"/>
    <property type="evidence" value="ECO:0007669"/>
    <property type="project" value="InterPro"/>
</dbReference>
<dbReference type="GO" id="GO:0042274">
    <property type="term" value="P:ribosomal small subunit biogenesis"/>
    <property type="evidence" value="ECO:0007669"/>
    <property type="project" value="UniProtKB-UniRule"/>
</dbReference>
<dbReference type="GO" id="GO:0006364">
    <property type="term" value="P:rRNA processing"/>
    <property type="evidence" value="ECO:0007669"/>
    <property type="project" value="UniProtKB-UniRule"/>
</dbReference>
<dbReference type="Gene3D" id="2.30.30.240">
    <property type="entry name" value="PRC-barrel domain"/>
    <property type="match status" value="1"/>
</dbReference>
<dbReference type="Gene3D" id="2.40.30.60">
    <property type="entry name" value="RimM"/>
    <property type="match status" value="1"/>
</dbReference>
<dbReference type="HAMAP" id="MF_00014">
    <property type="entry name" value="Ribosome_mat_RimM"/>
    <property type="match status" value="1"/>
</dbReference>
<dbReference type="InterPro" id="IPR011033">
    <property type="entry name" value="PRC_barrel-like_sf"/>
</dbReference>
<dbReference type="InterPro" id="IPR056792">
    <property type="entry name" value="PRC_RimM"/>
</dbReference>
<dbReference type="InterPro" id="IPR011961">
    <property type="entry name" value="RimM"/>
</dbReference>
<dbReference type="InterPro" id="IPR002676">
    <property type="entry name" value="RimM_N"/>
</dbReference>
<dbReference type="InterPro" id="IPR036976">
    <property type="entry name" value="RimM_N_sf"/>
</dbReference>
<dbReference type="InterPro" id="IPR009000">
    <property type="entry name" value="Transl_B-barrel_sf"/>
</dbReference>
<dbReference type="NCBIfam" id="TIGR02273">
    <property type="entry name" value="16S_RimM"/>
    <property type="match status" value="1"/>
</dbReference>
<dbReference type="PANTHER" id="PTHR33692">
    <property type="entry name" value="RIBOSOME MATURATION FACTOR RIMM"/>
    <property type="match status" value="1"/>
</dbReference>
<dbReference type="PANTHER" id="PTHR33692:SF1">
    <property type="entry name" value="RIBOSOME MATURATION FACTOR RIMM"/>
    <property type="match status" value="1"/>
</dbReference>
<dbReference type="Pfam" id="PF24986">
    <property type="entry name" value="PRC_RimM"/>
    <property type="match status" value="1"/>
</dbReference>
<dbReference type="Pfam" id="PF01782">
    <property type="entry name" value="RimM"/>
    <property type="match status" value="1"/>
</dbReference>
<dbReference type="SUPFAM" id="SSF50346">
    <property type="entry name" value="PRC-barrel domain"/>
    <property type="match status" value="1"/>
</dbReference>
<dbReference type="SUPFAM" id="SSF50447">
    <property type="entry name" value="Translation proteins"/>
    <property type="match status" value="1"/>
</dbReference>
<proteinExistence type="inferred from homology"/>
<feature type="chain" id="PRO_1000001244" description="Ribosome maturation factor RimM">
    <location>
        <begin position="1"/>
        <end position="176"/>
    </location>
</feature>
<feature type="domain" description="PRC barrel" evidence="1">
    <location>
        <begin position="104"/>
        <end position="176"/>
    </location>
</feature>
<protein>
    <recommendedName>
        <fullName evidence="1">Ribosome maturation factor RimM</fullName>
    </recommendedName>
</protein>
<comment type="function">
    <text evidence="1">An accessory protein needed during the final step in the assembly of 30S ribosomal subunit, possibly for assembly of the head region. Essential for efficient processing of 16S rRNA. May be needed both before and after RbfA during the maturation of 16S rRNA. It has affinity for free ribosomal 30S subunits but not for 70S ribosomes.</text>
</comment>
<comment type="subunit">
    <text evidence="1">Binds ribosomal protein uS19.</text>
</comment>
<comment type="subcellular location">
    <subcellularLocation>
        <location evidence="1">Cytoplasm</location>
    </subcellularLocation>
</comment>
<comment type="domain">
    <text evidence="1">The PRC barrel domain binds ribosomal protein uS19.</text>
</comment>
<comment type="similarity">
    <text evidence="1">Belongs to the RimM family.</text>
</comment>
<evidence type="ECO:0000255" key="1">
    <source>
        <dbReference type="HAMAP-Rule" id="MF_00014"/>
    </source>
</evidence>